<sequence length="179" mass="20633">MVRLQEQYQAEVKQALRDRFGYDNVMEIPRLSKVTLNMGLGEAVRDKKVLESAQAEMAEIAGQKPILTYARKSVAGFKIRDGWPIGCKVTLRRERMYEFLDRFINVAAPRIRDFRGFNPRSFDGRGNYNLGVREQLIFPEIDYEKVDAVRGMDITITTTAKTDEEGQALLEGFNFPFRK</sequence>
<evidence type="ECO:0000255" key="1">
    <source>
        <dbReference type="HAMAP-Rule" id="MF_01333"/>
    </source>
</evidence>
<evidence type="ECO:0000305" key="2"/>
<organism>
    <name type="scientific">Alkalilimnicola ehrlichii (strain ATCC BAA-1101 / DSM 17681 / MLHE-1)</name>
    <dbReference type="NCBI Taxonomy" id="187272"/>
    <lineage>
        <taxon>Bacteria</taxon>
        <taxon>Pseudomonadati</taxon>
        <taxon>Pseudomonadota</taxon>
        <taxon>Gammaproteobacteria</taxon>
        <taxon>Chromatiales</taxon>
        <taxon>Ectothiorhodospiraceae</taxon>
        <taxon>Alkalilimnicola</taxon>
    </lineage>
</organism>
<proteinExistence type="inferred from homology"/>
<gene>
    <name evidence="1" type="primary">rplE</name>
    <name type="ordered locus">Mlg_0470</name>
</gene>
<comment type="function">
    <text evidence="1">This is one of the proteins that bind and probably mediate the attachment of the 5S RNA into the large ribosomal subunit, where it forms part of the central protuberance. In the 70S ribosome it contacts protein S13 of the 30S subunit (bridge B1b), connecting the 2 subunits; this bridge is implicated in subunit movement. Contacts the P site tRNA; the 5S rRNA and some of its associated proteins might help stabilize positioning of ribosome-bound tRNAs.</text>
</comment>
<comment type="subunit">
    <text evidence="1">Part of the 50S ribosomal subunit; part of the 5S rRNA/L5/L18/L25 subcomplex. Contacts the 5S rRNA and the P site tRNA. Forms a bridge to the 30S subunit in the 70S ribosome.</text>
</comment>
<comment type="similarity">
    <text evidence="1">Belongs to the universal ribosomal protein uL5 family.</text>
</comment>
<feature type="chain" id="PRO_1000052687" description="Large ribosomal subunit protein uL5">
    <location>
        <begin position="1"/>
        <end position="179"/>
    </location>
</feature>
<protein>
    <recommendedName>
        <fullName evidence="1">Large ribosomal subunit protein uL5</fullName>
    </recommendedName>
    <alternativeName>
        <fullName evidence="2">50S ribosomal protein L5</fullName>
    </alternativeName>
</protein>
<reference key="1">
    <citation type="submission" date="2006-08" db="EMBL/GenBank/DDBJ databases">
        <title>Complete sequence of Alkalilimnicola ehrilichei MLHE-1.</title>
        <authorList>
            <person name="Copeland A."/>
            <person name="Lucas S."/>
            <person name="Lapidus A."/>
            <person name="Barry K."/>
            <person name="Detter J.C."/>
            <person name="Glavina del Rio T."/>
            <person name="Hammon N."/>
            <person name="Israni S."/>
            <person name="Dalin E."/>
            <person name="Tice H."/>
            <person name="Pitluck S."/>
            <person name="Sims D."/>
            <person name="Brettin T."/>
            <person name="Bruce D."/>
            <person name="Han C."/>
            <person name="Tapia R."/>
            <person name="Gilna P."/>
            <person name="Schmutz J."/>
            <person name="Larimer F."/>
            <person name="Land M."/>
            <person name="Hauser L."/>
            <person name="Kyrpides N."/>
            <person name="Mikhailova N."/>
            <person name="Oremland R.S."/>
            <person name="Hoeft S.E."/>
            <person name="Switzer-Blum J."/>
            <person name="Kulp T."/>
            <person name="King G."/>
            <person name="Tabita R."/>
            <person name="Witte B."/>
            <person name="Santini J.M."/>
            <person name="Basu P."/>
            <person name="Hollibaugh J.T."/>
            <person name="Xie G."/>
            <person name="Stolz J.F."/>
            <person name="Richardson P."/>
        </authorList>
    </citation>
    <scope>NUCLEOTIDE SEQUENCE [LARGE SCALE GENOMIC DNA]</scope>
    <source>
        <strain>ATCC BAA-1101 / DSM 17681 / MLHE-1</strain>
    </source>
</reference>
<keyword id="KW-1185">Reference proteome</keyword>
<keyword id="KW-0687">Ribonucleoprotein</keyword>
<keyword id="KW-0689">Ribosomal protein</keyword>
<keyword id="KW-0694">RNA-binding</keyword>
<keyword id="KW-0699">rRNA-binding</keyword>
<keyword id="KW-0820">tRNA-binding</keyword>
<dbReference type="EMBL" id="CP000453">
    <property type="protein sequence ID" value="ABI55824.1"/>
    <property type="molecule type" value="Genomic_DNA"/>
</dbReference>
<dbReference type="RefSeq" id="WP_011628219.1">
    <property type="nucleotide sequence ID" value="NC_008340.1"/>
</dbReference>
<dbReference type="SMR" id="Q0ABG3"/>
<dbReference type="KEGG" id="aeh:Mlg_0470"/>
<dbReference type="eggNOG" id="COG0094">
    <property type="taxonomic scope" value="Bacteria"/>
</dbReference>
<dbReference type="HOGENOM" id="CLU_061015_2_1_6"/>
<dbReference type="OrthoDB" id="9806626at2"/>
<dbReference type="Proteomes" id="UP000001962">
    <property type="component" value="Chromosome"/>
</dbReference>
<dbReference type="GO" id="GO:1990904">
    <property type="term" value="C:ribonucleoprotein complex"/>
    <property type="evidence" value="ECO:0007669"/>
    <property type="project" value="UniProtKB-KW"/>
</dbReference>
<dbReference type="GO" id="GO:0005840">
    <property type="term" value="C:ribosome"/>
    <property type="evidence" value="ECO:0007669"/>
    <property type="project" value="UniProtKB-KW"/>
</dbReference>
<dbReference type="GO" id="GO:0019843">
    <property type="term" value="F:rRNA binding"/>
    <property type="evidence" value="ECO:0007669"/>
    <property type="project" value="UniProtKB-UniRule"/>
</dbReference>
<dbReference type="GO" id="GO:0003735">
    <property type="term" value="F:structural constituent of ribosome"/>
    <property type="evidence" value="ECO:0007669"/>
    <property type="project" value="InterPro"/>
</dbReference>
<dbReference type="GO" id="GO:0000049">
    <property type="term" value="F:tRNA binding"/>
    <property type="evidence" value="ECO:0007669"/>
    <property type="project" value="UniProtKB-UniRule"/>
</dbReference>
<dbReference type="GO" id="GO:0006412">
    <property type="term" value="P:translation"/>
    <property type="evidence" value="ECO:0007669"/>
    <property type="project" value="UniProtKB-UniRule"/>
</dbReference>
<dbReference type="FunFam" id="3.30.1440.10:FF:000001">
    <property type="entry name" value="50S ribosomal protein L5"/>
    <property type="match status" value="1"/>
</dbReference>
<dbReference type="Gene3D" id="3.30.1440.10">
    <property type="match status" value="1"/>
</dbReference>
<dbReference type="HAMAP" id="MF_01333_B">
    <property type="entry name" value="Ribosomal_uL5_B"/>
    <property type="match status" value="1"/>
</dbReference>
<dbReference type="InterPro" id="IPR002132">
    <property type="entry name" value="Ribosomal_uL5"/>
</dbReference>
<dbReference type="InterPro" id="IPR020930">
    <property type="entry name" value="Ribosomal_uL5_bac-type"/>
</dbReference>
<dbReference type="InterPro" id="IPR031309">
    <property type="entry name" value="Ribosomal_uL5_C"/>
</dbReference>
<dbReference type="InterPro" id="IPR020929">
    <property type="entry name" value="Ribosomal_uL5_CS"/>
</dbReference>
<dbReference type="InterPro" id="IPR022803">
    <property type="entry name" value="Ribosomal_uL5_dom_sf"/>
</dbReference>
<dbReference type="InterPro" id="IPR031310">
    <property type="entry name" value="Ribosomal_uL5_N"/>
</dbReference>
<dbReference type="NCBIfam" id="NF000585">
    <property type="entry name" value="PRK00010.1"/>
    <property type="match status" value="1"/>
</dbReference>
<dbReference type="PANTHER" id="PTHR11994">
    <property type="entry name" value="60S RIBOSOMAL PROTEIN L11-RELATED"/>
    <property type="match status" value="1"/>
</dbReference>
<dbReference type="Pfam" id="PF00281">
    <property type="entry name" value="Ribosomal_L5"/>
    <property type="match status" value="1"/>
</dbReference>
<dbReference type="Pfam" id="PF00673">
    <property type="entry name" value="Ribosomal_L5_C"/>
    <property type="match status" value="1"/>
</dbReference>
<dbReference type="PIRSF" id="PIRSF002161">
    <property type="entry name" value="Ribosomal_L5"/>
    <property type="match status" value="1"/>
</dbReference>
<dbReference type="SUPFAM" id="SSF55282">
    <property type="entry name" value="RL5-like"/>
    <property type="match status" value="1"/>
</dbReference>
<dbReference type="PROSITE" id="PS00358">
    <property type="entry name" value="RIBOSOMAL_L5"/>
    <property type="match status" value="1"/>
</dbReference>
<name>RL5_ALKEH</name>
<accession>Q0ABG3</accession>